<comment type="function">
    <text evidence="1 3 4">Required for the assembly and/or stability of the 40S ribosomal subunit. Required for the processing of the 20S rRNA-precursor to mature 18S rRNA in a late step of the maturation of 40S ribosomal subunits.</text>
</comment>
<comment type="subunit">
    <text evidence="1">Component of the small ribosomal subunit. Mature ribosomes consist of a small (40S) and a large (60S) subunit. The 40S subunit contains about 33 different proteins and 1 molecule of RNA (18S). The 60S subunit contains about 49 different proteins and 3 molecules of RNA (25S, 5.8S and 5S). Interacts with RPS21.</text>
</comment>
<comment type="subcellular location">
    <subcellularLocation>
        <location>Cytoplasm</location>
    </subcellularLocation>
</comment>
<comment type="miscellaneous">
    <text>This protein appears to have acquired a second function as a laminin receptor specifically in the vertebrate lineage. A 67 kDa form similar to the human laminin receptor (67LR) has been isolated from the cell walls of blastoconidia, but it does not bind laminin.</text>
</comment>
<comment type="similarity">
    <text evidence="1">Belongs to the universal ribosomal protein uS2 family.</text>
</comment>
<comment type="sequence caution" evidence="5">
    <conflict type="frameshift">
        <sequence resource="EMBL-CDS" id="CAA72242"/>
    </conflict>
</comment>
<name>RSSA_CANAL</name>
<reference key="1">
    <citation type="journal article" date="1998" name="Microbiology">
        <title>A Candida albicans 37 kDa polypeptide with homology to the laminin receptor is a component of the translational machinery.</title>
        <authorList>
            <person name="Montero M."/>
            <person name="Marcilla A."/>
            <person name="Sentandreu R."/>
            <person name="Valentin E."/>
        </authorList>
    </citation>
    <scope>NUCLEOTIDE SEQUENCE [MRNA]</scope>
    <source>
        <strain>ATCC 26555</strain>
    </source>
</reference>
<reference key="2">
    <citation type="submission" date="1999-12" db="EMBL/GenBank/DDBJ databases">
        <title>Characterization of CaYST1,a gene of Candida albicans implicated in filamentation.</title>
        <authorList>
            <person name="Montero M."/>
            <person name="Ramon A.M."/>
            <person name="Valentin-Gomez E."/>
            <person name="Sentandreu R."/>
        </authorList>
    </citation>
    <scope>NUCLEOTIDE SEQUENCE [GENOMIC DNA]</scope>
    <scope>FUNCTION</scope>
</reference>
<reference key="3">
    <citation type="journal article" date="2004" name="Proc. Natl. Acad. Sci. U.S.A.">
        <title>The diploid genome sequence of Candida albicans.</title>
        <authorList>
            <person name="Jones T."/>
            <person name="Federspiel N.A."/>
            <person name="Chibana H."/>
            <person name="Dungan J."/>
            <person name="Kalman S."/>
            <person name="Magee B.B."/>
            <person name="Newport G."/>
            <person name="Thorstenson Y.R."/>
            <person name="Agabian N."/>
            <person name="Magee P.T."/>
            <person name="Davis R.W."/>
            <person name="Scherer S."/>
        </authorList>
    </citation>
    <scope>NUCLEOTIDE SEQUENCE [LARGE SCALE GENOMIC DNA]</scope>
    <source>
        <strain>SC5314 / ATCC MYA-2876</strain>
    </source>
</reference>
<reference key="4">
    <citation type="journal article" date="2007" name="Genome Biol.">
        <title>Assembly of the Candida albicans genome into sixteen supercontigs aligned on the eight chromosomes.</title>
        <authorList>
            <person name="van het Hoog M."/>
            <person name="Rast T.J."/>
            <person name="Martchenko M."/>
            <person name="Grindle S."/>
            <person name="Dignard D."/>
            <person name="Hogues H."/>
            <person name="Cuomo C."/>
            <person name="Berriman M."/>
            <person name="Scherer S."/>
            <person name="Magee B.B."/>
            <person name="Whiteway M."/>
            <person name="Chibana H."/>
            <person name="Nantel A."/>
            <person name="Magee P.T."/>
        </authorList>
    </citation>
    <scope>GENOME REANNOTATION</scope>
    <source>
        <strain>SC5314 / ATCC MYA-2876</strain>
    </source>
</reference>
<reference key="5">
    <citation type="journal article" date="2013" name="Genome Biol.">
        <title>Assembly of a phased diploid Candida albicans genome facilitates allele-specific measurements and provides a simple model for repeat and indel structure.</title>
        <authorList>
            <person name="Muzzey D."/>
            <person name="Schwartz K."/>
            <person name="Weissman J.S."/>
            <person name="Sherlock G."/>
        </authorList>
    </citation>
    <scope>NUCLEOTIDE SEQUENCE [LARGE SCALE GENOMIC DNA]</scope>
    <scope>GENOME REANNOTATION</scope>
    <source>
        <strain>SC5314 / ATCC MYA-2876</strain>
    </source>
</reference>
<reference key="6">
    <citation type="journal article" date="1994" name="Infect. Immun.">
        <title>Evidence for the presence of a high-affinity laminin receptor-like molecule on the surface of Candida albicans yeast cells.</title>
        <authorList>
            <person name="Lopez-Ribot J.L."/>
            <person name="Casanova M."/>
            <person name="Monteagudo C."/>
            <person name="Sepulveda P."/>
            <person name="Martinez J.P."/>
        </authorList>
    </citation>
    <scope>FUNCTION</scope>
</reference>
<proteinExistence type="evidence at protein level"/>
<protein>
    <recommendedName>
        <fullName evidence="1">Small ribosomal subunit protein uS2</fullName>
    </recommendedName>
    <alternativeName>
        <fullName>40S ribosomal protein S0</fullName>
    </alternativeName>
</protein>
<sequence length="261" mass="28730">MSLPASFDLTPEDAKLLLAANVHLGAKNVQVHNKPYVYKTRPDGMNIINIGKTWEKIVLAARIIAAVPNASDVAVCSSRTFGQRAVLKFAAHTGATAIAGRFTPGNFTNYITRSFKEPRLVVVTDPRTDAQAIKESSYVNIPVIALTDMDSPSEYVDVAIPCNNKGKHSIGLIWWLLAREVLRLRGIIPDRTTEWSVMPDLYFYRDPEEIEQNAVEEAKTEEVEEAPVAEAETEWTGETEDVDWADSGATPAAEDAAASNW</sequence>
<feature type="initiator methionine" description="Removed" evidence="1">
    <location>
        <position position="1"/>
    </location>
</feature>
<feature type="chain" id="PRO_0000134365" description="Small ribosomal subunit protein uS2">
    <location>
        <begin position="2"/>
        <end position="261"/>
    </location>
</feature>
<feature type="region of interest" description="Disordered" evidence="2">
    <location>
        <begin position="217"/>
        <end position="261"/>
    </location>
</feature>
<feature type="compositionally biased region" description="Acidic residues" evidence="2">
    <location>
        <begin position="222"/>
        <end position="244"/>
    </location>
</feature>
<feature type="modified residue" description="N-acetylserine" evidence="1">
    <location>
        <position position="2"/>
    </location>
</feature>
<feature type="sequence conflict" description="In Ref. 1; CAA72242." evidence="5" ref="1">
    <original>D</original>
    <variation>Q</variation>
    <location>
        <position position="150"/>
    </location>
</feature>
<feature type="sequence conflict" description="In Ref. 1; CAA72242." evidence="5" ref="1">
    <original>S</original>
    <variation>C</variation>
    <location>
        <position position="169"/>
    </location>
</feature>
<feature type="sequence conflict" description="In Ref. 1; CAA72242." evidence="5" ref="1">
    <original>E</original>
    <variation>G</variation>
    <location>
        <position position="222"/>
    </location>
</feature>
<feature type="sequence conflict" description="In Ref. 1; CAA72242." evidence="5" ref="1">
    <original>E</original>
    <variation>G</variation>
    <location>
        <position position="225"/>
    </location>
</feature>
<feature type="sequence conflict" description="In Ref. 1; CAA72242." evidence="5" ref="1">
    <original>N</original>
    <variation>I</variation>
    <location>
        <position position="260"/>
    </location>
</feature>
<keyword id="KW-0002">3D-structure</keyword>
<keyword id="KW-0007">Acetylation</keyword>
<keyword id="KW-0963">Cytoplasm</keyword>
<keyword id="KW-1185">Reference proteome</keyword>
<keyword id="KW-0687">Ribonucleoprotein</keyword>
<keyword id="KW-0689">Ribosomal protein</keyword>
<dbReference type="EMBL" id="Y11434">
    <property type="protein sequence ID" value="CAA72242.1"/>
    <property type="status" value="ALT_FRAME"/>
    <property type="molecule type" value="mRNA"/>
</dbReference>
<dbReference type="EMBL" id="AJ251858">
    <property type="protein sequence ID" value="CAB77627.1"/>
    <property type="molecule type" value="Genomic_DNA"/>
</dbReference>
<dbReference type="EMBL" id="CP017625">
    <property type="protein sequence ID" value="AOW28551.1"/>
    <property type="molecule type" value="Genomic_DNA"/>
</dbReference>
<dbReference type="RefSeq" id="XP_019330874.1">
    <property type="nucleotide sequence ID" value="XM_019475329.1"/>
</dbReference>
<dbReference type="PDB" id="7PZY">
    <property type="method" value="EM"/>
    <property type="resolution" value="2.32 A"/>
    <property type="chains" value="B=1-261"/>
</dbReference>
<dbReference type="PDB" id="7Q08">
    <property type="method" value="EM"/>
    <property type="resolution" value="2.56 A"/>
    <property type="chains" value="B=1-261"/>
</dbReference>
<dbReference type="PDB" id="7Q0F">
    <property type="method" value="EM"/>
    <property type="resolution" value="2.64 A"/>
    <property type="chains" value="B=1-261"/>
</dbReference>
<dbReference type="PDB" id="7Q0P">
    <property type="method" value="EM"/>
    <property type="resolution" value="2.77 A"/>
    <property type="chains" value="B=1-261"/>
</dbReference>
<dbReference type="PDB" id="7Q0R">
    <property type="method" value="EM"/>
    <property type="resolution" value="2.67 A"/>
    <property type="chains" value="B=1-261"/>
</dbReference>
<dbReference type="PDB" id="8C3A">
    <property type="method" value="X-ray"/>
    <property type="resolution" value="3.00 A"/>
    <property type="chains" value="C/CN=1-261"/>
</dbReference>
<dbReference type="PDB" id="8OGJ">
    <property type="method" value="EM"/>
    <property type="resolution" value="3.10 A"/>
    <property type="chains" value="B=1-261"/>
</dbReference>
<dbReference type="PDB" id="8OH6">
    <property type="method" value="X-ray"/>
    <property type="resolution" value="3.35 A"/>
    <property type="chains" value="C/CN=1-261"/>
</dbReference>
<dbReference type="PDB" id="8OI5">
    <property type="method" value="X-ray"/>
    <property type="resolution" value="2.90 A"/>
    <property type="chains" value="C/CN=1-261"/>
</dbReference>
<dbReference type="PDB" id="8OJ3">
    <property type="method" value="X-ray"/>
    <property type="resolution" value="3.50 A"/>
    <property type="chains" value="C/CN=1-261"/>
</dbReference>
<dbReference type="PDBsum" id="7PZY"/>
<dbReference type="PDBsum" id="7Q08"/>
<dbReference type="PDBsum" id="7Q0F"/>
<dbReference type="PDBsum" id="7Q0P"/>
<dbReference type="PDBsum" id="7Q0R"/>
<dbReference type="PDBsum" id="8C3A"/>
<dbReference type="PDBsum" id="8OGJ"/>
<dbReference type="PDBsum" id="8OH6"/>
<dbReference type="PDBsum" id="8OI5"/>
<dbReference type="PDBsum" id="8OJ3"/>
<dbReference type="EMDB" id="EMD-13737"/>
<dbReference type="EMDB" id="EMD-13741"/>
<dbReference type="EMDB" id="EMD-13744"/>
<dbReference type="EMDB" id="EMD-13749"/>
<dbReference type="EMDB" id="EMD-13750"/>
<dbReference type="SMR" id="O42817"/>
<dbReference type="BioGRID" id="1226772">
    <property type="interactions" value="2"/>
</dbReference>
<dbReference type="FunCoup" id="O42817">
    <property type="interactions" value="1392"/>
</dbReference>
<dbReference type="STRING" id="237561.O42817"/>
<dbReference type="EnsemblFungi" id="C3_05370C_A-T">
    <property type="protein sequence ID" value="C3_05370C_A-T-p1"/>
    <property type="gene ID" value="C3_05370C_A"/>
</dbReference>
<dbReference type="GeneID" id="3643678"/>
<dbReference type="KEGG" id="cal:CAALFM_C305370CA"/>
<dbReference type="CGD" id="CAL0000191976">
    <property type="gene designation" value="YST1"/>
</dbReference>
<dbReference type="VEuPathDB" id="FungiDB:C3_05370C_A"/>
<dbReference type="eggNOG" id="KOG0830">
    <property type="taxonomic scope" value="Eukaryota"/>
</dbReference>
<dbReference type="HOGENOM" id="CLU_058171_2_0_1"/>
<dbReference type="InParanoid" id="O42817"/>
<dbReference type="OMA" id="VKNFFEP"/>
<dbReference type="OrthoDB" id="414863at2759"/>
<dbReference type="Proteomes" id="UP000000559">
    <property type="component" value="Chromosome 3"/>
</dbReference>
<dbReference type="GO" id="GO:0022627">
    <property type="term" value="C:cytosolic small ribosomal subunit"/>
    <property type="evidence" value="ECO:0000318"/>
    <property type="project" value="GO_Central"/>
</dbReference>
<dbReference type="GO" id="GO:0016020">
    <property type="term" value="C:membrane"/>
    <property type="evidence" value="ECO:0000314"/>
    <property type="project" value="CGD"/>
</dbReference>
<dbReference type="GO" id="GO:0005840">
    <property type="term" value="C:ribosome"/>
    <property type="evidence" value="ECO:0000314"/>
    <property type="project" value="CGD"/>
</dbReference>
<dbReference type="GO" id="GO:0003735">
    <property type="term" value="F:structural constituent of ribosome"/>
    <property type="evidence" value="ECO:0000316"/>
    <property type="project" value="CGD"/>
</dbReference>
<dbReference type="GO" id="GO:0002181">
    <property type="term" value="P:cytoplasmic translation"/>
    <property type="evidence" value="ECO:0000318"/>
    <property type="project" value="GO_Central"/>
</dbReference>
<dbReference type="GO" id="GO:0000028">
    <property type="term" value="P:ribosomal small subunit assembly"/>
    <property type="evidence" value="ECO:0000318"/>
    <property type="project" value="GO_Central"/>
</dbReference>
<dbReference type="GO" id="GO:0006412">
    <property type="term" value="P:translation"/>
    <property type="evidence" value="ECO:0000316"/>
    <property type="project" value="CGD"/>
</dbReference>
<dbReference type="CDD" id="cd01425">
    <property type="entry name" value="RPS2"/>
    <property type="match status" value="1"/>
</dbReference>
<dbReference type="FunFam" id="3.40.50.10490:FF:000010">
    <property type="entry name" value="40S ribosomal protein S0"/>
    <property type="match status" value="1"/>
</dbReference>
<dbReference type="Gene3D" id="3.40.50.10490">
    <property type="entry name" value="Glucose-6-phosphate isomerase like protein, domain 1"/>
    <property type="match status" value="1"/>
</dbReference>
<dbReference type="HAMAP" id="MF_03015">
    <property type="entry name" value="Ribosomal_S2_euk"/>
    <property type="match status" value="1"/>
</dbReference>
<dbReference type="InterPro" id="IPR001865">
    <property type="entry name" value="Ribosomal_uS2"/>
</dbReference>
<dbReference type="InterPro" id="IPR018130">
    <property type="entry name" value="Ribosomal_uS2_CS"/>
</dbReference>
<dbReference type="InterPro" id="IPR027498">
    <property type="entry name" value="Ribosomal_uS2_euk"/>
</dbReference>
<dbReference type="InterPro" id="IPR005707">
    <property type="entry name" value="Ribosomal_uS2_euk/arc"/>
</dbReference>
<dbReference type="InterPro" id="IPR023591">
    <property type="entry name" value="Ribosomal_uS2_flav_dom_sf"/>
</dbReference>
<dbReference type="NCBIfam" id="TIGR01012">
    <property type="entry name" value="uS2_euk_arch"/>
    <property type="match status" value="1"/>
</dbReference>
<dbReference type="PANTHER" id="PTHR11489">
    <property type="entry name" value="40S RIBOSOMAL PROTEIN SA"/>
    <property type="match status" value="1"/>
</dbReference>
<dbReference type="Pfam" id="PF00318">
    <property type="entry name" value="Ribosomal_S2"/>
    <property type="match status" value="2"/>
</dbReference>
<dbReference type="PRINTS" id="PR00395">
    <property type="entry name" value="RIBOSOMALS2"/>
</dbReference>
<dbReference type="SUPFAM" id="SSF52313">
    <property type="entry name" value="Ribosomal protein S2"/>
    <property type="match status" value="1"/>
</dbReference>
<dbReference type="PROSITE" id="PS00962">
    <property type="entry name" value="RIBOSOMAL_S2_1"/>
    <property type="match status" value="1"/>
</dbReference>
<dbReference type="PROSITE" id="PS00963">
    <property type="entry name" value="RIBOSOMAL_S2_2"/>
    <property type="match status" value="1"/>
</dbReference>
<evidence type="ECO:0000255" key="1">
    <source>
        <dbReference type="HAMAP-Rule" id="MF_03015"/>
    </source>
</evidence>
<evidence type="ECO:0000256" key="2">
    <source>
        <dbReference type="SAM" id="MobiDB-lite"/>
    </source>
</evidence>
<evidence type="ECO:0000269" key="3">
    <source>
    </source>
</evidence>
<evidence type="ECO:0000269" key="4">
    <source ref="2"/>
</evidence>
<evidence type="ECO:0000305" key="5"/>
<accession>O42817</accession>
<accession>A0A1D8PK64</accession>
<accession>Q59YU8</accession>
<accession>Q9P8C6</accession>
<gene>
    <name evidence="1" type="primary">RPS0</name>
    <name type="synonym">YST1</name>
    <name type="ordered locus">CAALFM_C305370CA</name>
    <name type="ORF">CaO19.6975</name>
</gene>
<organism>
    <name type="scientific">Candida albicans (strain SC5314 / ATCC MYA-2876)</name>
    <name type="common">Yeast</name>
    <dbReference type="NCBI Taxonomy" id="237561"/>
    <lineage>
        <taxon>Eukaryota</taxon>
        <taxon>Fungi</taxon>
        <taxon>Dikarya</taxon>
        <taxon>Ascomycota</taxon>
        <taxon>Saccharomycotina</taxon>
        <taxon>Pichiomycetes</taxon>
        <taxon>Debaryomycetaceae</taxon>
        <taxon>Candida/Lodderomyces clade</taxon>
        <taxon>Candida</taxon>
    </lineage>
</organism>